<dbReference type="EMBL" id="AP009384">
    <property type="protein sequence ID" value="BAF86018.1"/>
    <property type="molecule type" value="Genomic_DNA"/>
</dbReference>
<dbReference type="RefSeq" id="WP_012168551.1">
    <property type="nucleotide sequence ID" value="NC_009937.1"/>
</dbReference>
<dbReference type="SMR" id="A8IG20"/>
<dbReference type="STRING" id="438753.AZC_0020"/>
<dbReference type="KEGG" id="azc:AZC_0020"/>
<dbReference type="eggNOG" id="COG0532">
    <property type="taxonomic scope" value="Bacteria"/>
</dbReference>
<dbReference type="HOGENOM" id="CLU_006301_10_0_5"/>
<dbReference type="Proteomes" id="UP000000270">
    <property type="component" value="Chromosome"/>
</dbReference>
<dbReference type="GO" id="GO:0005829">
    <property type="term" value="C:cytosol"/>
    <property type="evidence" value="ECO:0007669"/>
    <property type="project" value="TreeGrafter"/>
</dbReference>
<dbReference type="GO" id="GO:0005525">
    <property type="term" value="F:GTP binding"/>
    <property type="evidence" value="ECO:0007669"/>
    <property type="project" value="UniProtKB-KW"/>
</dbReference>
<dbReference type="GO" id="GO:0003924">
    <property type="term" value="F:GTPase activity"/>
    <property type="evidence" value="ECO:0007669"/>
    <property type="project" value="UniProtKB-UniRule"/>
</dbReference>
<dbReference type="GO" id="GO:0097216">
    <property type="term" value="F:guanosine tetraphosphate binding"/>
    <property type="evidence" value="ECO:0007669"/>
    <property type="project" value="UniProtKB-ARBA"/>
</dbReference>
<dbReference type="GO" id="GO:0003743">
    <property type="term" value="F:translation initiation factor activity"/>
    <property type="evidence" value="ECO:0007669"/>
    <property type="project" value="UniProtKB-UniRule"/>
</dbReference>
<dbReference type="CDD" id="cd01887">
    <property type="entry name" value="IF2_eIF5B"/>
    <property type="match status" value="1"/>
</dbReference>
<dbReference type="CDD" id="cd03702">
    <property type="entry name" value="IF2_mtIF2_II"/>
    <property type="match status" value="1"/>
</dbReference>
<dbReference type="CDD" id="cd03692">
    <property type="entry name" value="mtIF2_IVc"/>
    <property type="match status" value="1"/>
</dbReference>
<dbReference type="FunFam" id="2.40.30.10:FF:000007">
    <property type="entry name" value="Translation initiation factor IF-2"/>
    <property type="match status" value="1"/>
</dbReference>
<dbReference type="FunFam" id="2.40.30.10:FF:000008">
    <property type="entry name" value="Translation initiation factor IF-2"/>
    <property type="match status" value="1"/>
</dbReference>
<dbReference type="FunFam" id="3.40.50.10050:FF:000001">
    <property type="entry name" value="Translation initiation factor IF-2"/>
    <property type="match status" value="1"/>
</dbReference>
<dbReference type="FunFam" id="3.40.50.300:FF:000019">
    <property type="entry name" value="Translation initiation factor IF-2"/>
    <property type="match status" value="1"/>
</dbReference>
<dbReference type="Gene3D" id="3.40.50.300">
    <property type="entry name" value="P-loop containing nucleotide triphosphate hydrolases"/>
    <property type="match status" value="1"/>
</dbReference>
<dbReference type="Gene3D" id="2.40.30.10">
    <property type="entry name" value="Translation factors"/>
    <property type="match status" value="2"/>
</dbReference>
<dbReference type="Gene3D" id="3.40.50.10050">
    <property type="entry name" value="Translation initiation factor IF- 2, domain 3"/>
    <property type="match status" value="1"/>
</dbReference>
<dbReference type="HAMAP" id="MF_00100_B">
    <property type="entry name" value="IF_2_B"/>
    <property type="match status" value="1"/>
</dbReference>
<dbReference type="InterPro" id="IPR053905">
    <property type="entry name" value="EF-G-like_DII"/>
</dbReference>
<dbReference type="InterPro" id="IPR004161">
    <property type="entry name" value="EFTu-like_2"/>
</dbReference>
<dbReference type="InterPro" id="IPR013575">
    <property type="entry name" value="IF2_assoc_dom_bac"/>
</dbReference>
<dbReference type="InterPro" id="IPR044145">
    <property type="entry name" value="IF2_II"/>
</dbReference>
<dbReference type="InterPro" id="IPR006847">
    <property type="entry name" value="IF2_N"/>
</dbReference>
<dbReference type="InterPro" id="IPR027417">
    <property type="entry name" value="P-loop_NTPase"/>
</dbReference>
<dbReference type="InterPro" id="IPR005225">
    <property type="entry name" value="Small_GTP-bd"/>
</dbReference>
<dbReference type="InterPro" id="IPR000795">
    <property type="entry name" value="T_Tr_GTP-bd_dom"/>
</dbReference>
<dbReference type="InterPro" id="IPR000178">
    <property type="entry name" value="TF_IF2_bacterial-like"/>
</dbReference>
<dbReference type="InterPro" id="IPR015760">
    <property type="entry name" value="TIF_IF2"/>
</dbReference>
<dbReference type="InterPro" id="IPR023115">
    <property type="entry name" value="TIF_IF2_dom3"/>
</dbReference>
<dbReference type="InterPro" id="IPR036925">
    <property type="entry name" value="TIF_IF2_dom3_sf"/>
</dbReference>
<dbReference type="InterPro" id="IPR009000">
    <property type="entry name" value="Transl_B-barrel_sf"/>
</dbReference>
<dbReference type="NCBIfam" id="TIGR00487">
    <property type="entry name" value="IF-2"/>
    <property type="match status" value="1"/>
</dbReference>
<dbReference type="NCBIfam" id="TIGR00231">
    <property type="entry name" value="small_GTP"/>
    <property type="match status" value="1"/>
</dbReference>
<dbReference type="PANTHER" id="PTHR43381:SF5">
    <property type="entry name" value="TR-TYPE G DOMAIN-CONTAINING PROTEIN"/>
    <property type="match status" value="1"/>
</dbReference>
<dbReference type="PANTHER" id="PTHR43381">
    <property type="entry name" value="TRANSLATION INITIATION FACTOR IF-2-RELATED"/>
    <property type="match status" value="1"/>
</dbReference>
<dbReference type="Pfam" id="PF22042">
    <property type="entry name" value="EF-G_D2"/>
    <property type="match status" value="1"/>
</dbReference>
<dbReference type="Pfam" id="PF00009">
    <property type="entry name" value="GTP_EFTU"/>
    <property type="match status" value="1"/>
</dbReference>
<dbReference type="Pfam" id="PF03144">
    <property type="entry name" value="GTP_EFTU_D2"/>
    <property type="match status" value="1"/>
</dbReference>
<dbReference type="Pfam" id="PF11987">
    <property type="entry name" value="IF-2"/>
    <property type="match status" value="1"/>
</dbReference>
<dbReference type="Pfam" id="PF08364">
    <property type="entry name" value="IF2_assoc"/>
    <property type="match status" value="1"/>
</dbReference>
<dbReference type="Pfam" id="PF04760">
    <property type="entry name" value="IF2_N"/>
    <property type="match status" value="1"/>
</dbReference>
<dbReference type="SUPFAM" id="SSF52156">
    <property type="entry name" value="Initiation factor IF2/eIF5b, domain 3"/>
    <property type="match status" value="1"/>
</dbReference>
<dbReference type="SUPFAM" id="SSF52540">
    <property type="entry name" value="P-loop containing nucleoside triphosphate hydrolases"/>
    <property type="match status" value="1"/>
</dbReference>
<dbReference type="SUPFAM" id="SSF50447">
    <property type="entry name" value="Translation proteins"/>
    <property type="match status" value="2"/>
</dbReference>
<dbReference type="PROSITE" id="PS51722">
    <property type="entry name" value="G_TR_2"/>
    <property type="match status" value="1"/>
</dbReference>
<feature type="chain" id="PRO_1000071286" description="Translation initiation factor IF-2">
    <location>
        <begin position="1"/>
        <end position="1058"/>
    </location>
</feature>
<feature type="domain" description="tr-type G">
    <location>
        <begin position="555"/>
        <end position="725"/>
    </location>
</feature>
<feature type="region of interest" description="Disordered" evidence="3">
    <location>
        <begin position="1"/>
        <end position="468"/>
    </location>
</feature>
<feature type="region of interest" description="G1" evidence="1">
    <location>
        <begin position="564"/>
        <end position="571"/>
    </location>
</feature>
<feature type="region of interest" description="G2" evidence="1">
    <location>
        <begin position="589"/>
        <end position="593"/>
    </location>
</feature>
<feature type="region of interest" description="G3" evidence="1">
    <location>
        <begin position="611"/>
        <end position="614"/>
    </location>
</feature>
<feature type="region of interest" description="G4" evidence="1">
    <location>
        <begin position="665"/>
        <end position="668"/>
    </location>
</feature>
<feature type="region of interest" description="G5" evidence="1">
    <location>
        <begin position="701"/>
        <end position="703"/>
    </location>
</feature>
<feature type="compositionally biased region" description="Basic and acidic residues" evidence="3">
    <location>
        <begin position="1"/>
        <end position="12"/>
    </location>
</feature>
<feature type="compositionally biased region" description="Low complexity" evidence="3">
    <location>
        <begin position="54"/>
        <end position="81"/>
    </location>
</feature>
<feature type="compositionally biased region" description="Pro residues" evidence="3">
    <location>
        <begin position="82"/>
        <end position="95"/>
    </location>
</feature>
<feature type="compositionally biased region" description="Low complexity" evidence="3">
    <location>
        <begin position="96"/>
        <end position="108"/>
    </location>
</feature>
<feature type="compositionally biased region" description="Pro residues" evidence="3">
    <location>
        <begin position="109"/>
        <end position="119"/>
    </location>
</feature>
<feature type="compositionally biased region" description="Low complexity" evidence="3">
    <location>
        <begin position="120"/>
        <end position="156"/>
    </location>
</feature>
<feature type="compositionally biased region" description="Low complexity" evidence="3">
    <location>
        <begin position="164"/>
        <end position="228"/>
    </location>
</feature>
<feature type="compositionally biased region" description="Gly residues" evidence="3">
    <location>
        <begin position="244"/>
        <end position="271"/>
    </location>
</feature>
<feature type="compositionally biased region" description="Basic and acidic residues" evidence="3">
    <location>
        <begin position="292"/>
        <end position="364"/>
    </location>
</feature>
<feature type="compositionally biased region" description="Low complexity" evidence="3">
    <location>
        <begin position="368"/>
        <end position="396"/>
    </location>
</feature>
<feature type="compositionally biased region" description="Basic residues" evidence="3">
    <location>
        <begin position="452"/>
        <end position="461"/>
    </location>
</feature>
<feature type="binding site" evidence="2">
    <location>
        <begin position="564"/>
        <end position="571"/>
    </location>
    <ligand>
        <name>GTP</name>
        <dbReference type="ChEBI" id="CHEBI:37565"/>
    </ligand>
</feature>
<feature type="binding site" evidence="2">
    <location>
        <begin position="611"/>
        <end position="615"/>
    </location>
    <ligand>
        <name>GTP</name>
        <dbReference type="ChEBI" id="CHEBI:37565"/>
    </ligand>
</feature>
<feature type="binding site" evidence="2">
    <location>
        <begin position="665"/>
        <end position="668"/>
    </location>
    <ligand>
        <name>GTP</name>
        <dbReference type="ChEBI" id="CHEBI:37565"/>
    </ligand>
</feature>
<comment type="function">
    <text evidence="2">One of the essential components for the initiation of protein synthesis. Protects formylmethionyl-tRNA from spontaneous hydrolysis and promotes its binding to the 30S ribosomal subunits. Also involved in the hydrolysis of GTP during the formation of the 70S ribosomal complex.</text>
</comment>
<comment type="subcellular location">
    <subcellularLocation>
        <location evidence="2">Cytoplasm</location>
    </subcellularLocation>
</comment>
<comment type="similarity">
    <text evidence="2">Belongs to the TRAFAC class translation factor GTPase superfamily. Classic translation factor GTPase family. IF-2 subfamily.</text>
</comment>
<reference key="1">
    <citation type="submission" date="2007-04" db="EMBL/GenBank/DDBJ databases">
        <title>Complete genome sequence of the nitrogen-fixing bacterium Azorhizobium caulinodans ORS571.</title>
        <authorList>
            <person name="Lee K.B."/>
            <person name="Backer P.D."/>
            <person name="Aono T."/>
            <person name="Liu C.T."/>
            <person name="Suzuki S."/>
            <person name="Suzuki T."/>
            <person name="Kaneko T."/>
            <person name="Yamada M."/>
            <person name="Tabata S."/>
            <person name="Kupfer D.M."/>
            <person name="Najar F.Z."/>
            <person name="Wiley G.B."/>
            <person name="Roe B."/>
            <person name="Binnewies T."/>
            <person name="Ussery D."/>
            <person name="Vereecke D."/>
            <person name="Gevers D."/>
            <person name="Holsters M."/>
            <person name="Oyaizu H."/>
        </authorList>
    </citation>
    <scope>NUCLEOTIDE SEQUENCE [LARGE SCALE GENOMIC DNA]</scope>
    <source>
        <strain>ATCC 43989 / DSM 5975 / JCM 20966 / LMG 6465 / NBRC 14845 / NCIMB 13405 / ORS 571</strain>
    </source>
</reference>
<name>IF2_AZOC5</name>
<proteinExistence type="inferred from homology"/>
<sequence length="1058" mass="111350">MNDTKTPGDKTLHPAPGKTLTLKRPVEQGTVRQSFSHGRSKSVVVEKVKRRVFAPGEAGAPSGTPAAAPAATPAPAAAAPRPATPAPAAPRPAAPATPAQPAAEAKAPAPAPTPAPAAPAAPVAEAPKVEAPAPVAAKPEAAPAAPVAEAPKVEVPAPAPAPAEPVAAQPAAPVAAAPAAPARAPEAPRPAVSAPRPAATTSSGSSSSSSRPAAGGAQRSGAAPQRPGTSGGPGRPGAPASGQRSGGPGSDRRGGPGGQNRPGQNRQGGSGVVLRTLTEEERNARASALADARVREVEERRMAEERRIAEEEARRRAERERAERAEREAAEARKREEESRRALEDESKRRAEQEARKRFGEETGRSGGASAPSTSTARPLTPRPAGTTTTTGAPAAGEEEDRRPRRGGGVPPRPAAPVKLPKSAGGEKHRGRLTVVTAQSGEEERQRSVASFRRRTQRMTGHRGMQESKEKIVREVVLPETITIQELANRMSERAVDVIRMLMKQGQMVKITDVIDADTAELIAADLGHTVRRVSESDVEEGLFDSADAPEDLLPRPPVVTIMGHVDHGKTSLLDSLRKANVVSGEAGGITQHIGAYQVTSPLGGKITFIDTPGHAAFTAMRARGAKVTDIVVLVVAADDGVMPQTVEAINHARAAKVPLIVAINKIDKPDAKPERVRSELLQYEVQVESMGGDTLEVEVSATKQINLDKLLEAISLQSEVLDLKANPDRPAEGTVVEAKLDRGRGPVATVLVQRGTLRVGDIVVAGAEFGRVRALITDTGATTTEAGPSVPVEVLGFNGTPEAGDRLAVVESEARAREITEYRQRQKREKAAARSAVVRGSLEQMMSQVRSTGRKEFPLIIKGDVSGSVEAIIGALEKLGNDEVQARIIHSGAGGINESDVTLAETSGAAIIGFNVRANKEARDSAERAGIEIRYYNIIYDLVDDVKKAMSGLLAPITRETMLGNALILEIFNVSKVGKVAGCRVTDGTVERGQHVRLIRDNVVIHEGKLATLNRFKDAVKEVLAGQECGMSFENYQDMRAGDVIECYRVEVVQRSL</sequence>
<protein>
    <recommendedName>
        <fullName evidence="2">Translation initiation factor IF-2</fullName>
    </recommendedName>
</protein>
<organism>
    <name type="scientific">Azorhizobium caulinodans (strain ATCC 43989 / DSM 5975 / JCM 20966 / LMG 6465 / NBRC 14845 / NCIMB 13405 / ORS 571)</name>
    <dbReference type="NCBI Taxonomy" id="438753"/>
    <lineage>
        <taxon>Bacteria</taxon>
        <taxon>Pseudomonadati</taxon>
        <taxon>Pseudomonadota</taxon>
        <taxon>Alphaproteobacteria</taxon>
        <taxon>Hyphomicrobiales</taxon>
        <taxon>Xanthobacteraceae</taxon>
        <taxon>Azorhizobium</taxon>
    </lineage>
</organism>
<gene>
    <name evidence="2" type="primary">infB</name>
    <name type="ordered locus">AZC_0020</name>
</gene>
<keyword id="KW-0963">Cytoplasm</keyword>
<keyword id="KW-0342">GTP-binding</keyword>
<keyword id="KW-0396">Initiation factor</keyword>
<keyword id="KW-0547">Nucleotide-binding</keyword>
<keyword id="KW-0648">Protein biosynthesis</keyword>
<keyword id="KW-1185">Reference proteome</keyword>
<evidence type="ECO:0000250" key="1"/>
<evidence type="ECO:0000255" key="2">
    <source>
        <dbReference type="HAMAP-Rule" id="MF_00100"/>
    </source>
</evidence>
<evidence type="ECO:0000256" key="3">
    <source>
        <dbReference type="SAM" id="MobiDB-lite"/>
    </source>
</evidence>
<accession>A8IG20</accession>